<sequence>MKEFHKINLLNDYYGSLLTERQQNFIELYYGEDLSLGEIAEQYNVTRQAVHDTLKRAEQTLTNYEEKLGLVSKFSQESKSLVEVINLLDGYESGEAPEGLEKSKGILKKILEKRQDL</sequence>
<gene>
    <name type="ordered locus">Dred_2057</name>
</gene>
<comment type="function">
    <text evidence="1">Might take part in the signal recognition particle (SRP) pathway. This is inferred from the conservation of its genetic proximity to ftsY/ffh. May be a regulatory protein.</text>
</comment>
<comment type="similarity">
    <text evidence="1">Belongs to the UPF0122 family.</text>
</comment>
<keyword id="KW-1185">Reference proteome</keyword>
<reference key="1">
    <citation type="submission" date="2007-03" db="EMBL/GenBank/DDBJ databases">
        <title>Complete sequence of Desulfotomaculum reducens MI-1.</title>
        <authorList>
            <consortium name="US DOE Joint Genome Institute"/>
            <person name="Copeland A."/>
            <person name="Lucas S."/>
            <person name="Lapidus A."/>
            <person name="Barry K."/>
            <person name="Detter J.C."/>
            <person name="Glavina del Rio T."/>
            <person name="Hammon N."/>
            <person name="Israni S."/>
            <person name="Dalin E."/>
            <person name="Tice H."/>
            <person name="Pitluck S."/>
            <person name="Sims D."/>
            <person name="Brettin T."/>
            <person name="Bruce D."/>
            <person name="Han C."/>
            <person name="Tapia R."/>
            <person name="Schmutz J."/>
            <person name="Larimer F."/>
            <person name="Land M."/>
            <person name="Hauser L."/>
            <person name="Kyrpides N."/>
            <person name="Kim E."/>
            <person name="Tebo B.M."/>
            <person name="Richardson P."/>
        </authorList>
    </citation>
    <scope>NUCLEOTIDE SEQUENCE [LARGE SCALE GENOMIC DNA]</scope>
    <source>
        <strain>ATCC BAA-1160 / DSM 100696 / MI-1</strain>
    </source>
</reference>
<name>Y2057_DESRM</name>
<protein>
    <recommendedName>
        <fullName evidence="1">UPF0122 protein Dred_2057</fullName>
    </recommendedName>
</protein>
<proteinExistence type="inferred from homology"/>
<organism>
    <name type="scientific">Desulforamulus reducens (strain ATCC BAA-1160 / DSM 100696 / MI-1)</name>
    <name type="common">Desulfotomaculum reducens</name>
    <dbReference type="NCBI Taxonomy" id="349161"/>
    <lineage>
        <taxon>Bacteria</taxon>
        <taxon>Bacillati</taxon>
        <taxon>Bacillota</taxon>
        <taxon>Clostridia</taxon>
        <taxon>Eubacteriales</taxon>
        <taxon>Peptococcaceae</taxon>
        <taxon>Desulforamulus</taxon>
    </lineage>
</organism>
<accession>A4J671</accession>
<feature type="chain" id="PRO_1000078401" description="UPF0122 protein Dred_2057">
    <location>
        <begin position="1"/>
        <end position="117"/>
    </location>
</feature>
<dbReference type="EMBL" id="CP000612">
    <property type="protein sequence ID" value="ABO50574.1"/>
    <property type="molecule type" value="Genomic_DNA"/>
</dbReference>
<dbReference type="RefSeq" id="WP_011878380.1">
    <property type="nucleotide sequence ID" value="NC_009253.1"/>
</dbReference>
<dbReference type="SMR" id="A4J671"/>
<dbReference type="STRING" id="349161.Dred_2057"/>
<dbReference type="KEGG" id="drm:Dred_2057"/>
<dbReference type="eggNOG" id="COG2739">
    <property type="taxonomic scope" value="Bacteria"/>
</dbReference>
<dbReference type="HOGENOM" id="CLU_129218_0_0_9"/>
<dbReference type="OrthoDB" id="6392at2"/>
<dbReference type="Proteomes" id="UP000001556">
    <property type="component" value="Chromosome"/>
</dbReference>
<dbReference type="CDD" id="cd06171">
    <property type="entry name" value="Sigma70_r4"/>
    <property type="match status" value="1"/>
</dbReference>
<dbReference type="Gene3D" id="1.10.10.10">
    <property type="entry name" value="Winged helix-like DNA-binding domain superfamily/Winged helix DNA-binding domain"/>
    <property type="match status" value="1"/>
</dbReference>
<dbReference type="HAMAP" id="MF_00245">
    <property type="entry name" value="UPF0122"/>
    <property type="match status" value="1"/>
</dbReference>
<dbReference type="InterPro" id="IPR013324">
    <property type="entry name" value="RNA_pol_sigma_r3/r4-like"/>
</dbReference>
<dbReference type="InterPro" id="IPR007394">
    <property type="entry name" value="UPF0122"/>
</dbReference>
<dbReference type="InterPro" id="IPR054831">
    <property type="entry name" value="UPF0122_fam_protein"/>
</dbReference>
<dbReference type="InterPro" id="IPR036388">
    <property type="entry name" value="WH-like_DNA-bd_sf"/>
</dbReference>
<dbReference type="NCBIfam" id="NF001072">
    <property type="entry name" value="PRK00118.2-2"/>
    <property type="match status" value="1"/>
</dbReference>
<dbReference type="NCBIfam" id="NF045758">
    <property type="entry name" value="YlxM"/>
    <property type="match status" value="1"/>
</dbReference>
<dbReference type="PANTHER" id="PTHR40083">
    <property type="entry name" value="UPF0122 PROTEIN CBO2450/CLC_2298"/>
    <property type="match status" value="1"/>
</dbReference>
<dbReference type="PANTHER" id="PTHR40083:SF1">
    <property type="entry name" value="UPF0122 PROTEIN YLXM"/>
    <property type="match status" value="1"/>
</dbReference>
<dbReference type="Pfam" id="PF04297">
    <property type="entry name" value="UPF0122"/>
    <property type="match status" value="1"/>
</dbReference>
<dbReference type="SUPFAM" id="SSF88659">
    <property type="entry name" value="Sigma3 and sigma4 domains of RNA polymerase sigma factors"/>
    <property type="match status" value="1"/>
</dbReference>
<evidence type="ECO:0000255" key="1">
    <source>
        <dbReference type="HAMAP-Rule" id="MF_00245"/>
    </source>
</evidence>